<feature type="chain" id="PRO_1000017052" description="tRNA pseudouridine synthase A">
    <location>
        <begin position="1"/>
        <end position="270"/>
    </location>
</feature>
<feature type="active site" description="Nucleophile" evidence="1">
    <location>
        <position position="51"/>
    </location>
</feature>
<feature type="binding site" evidence="1">
    <location>
        <position position="109"/>
    </location>
    <ligand>
        <name>substrate</name>
    </ligand>
</feature>
<sequence>MRIALGVQYDGAAFCGWQAQPHGKTVQDALERALGEFACVPLHTTVAGRTDTGVHGLGQVVHFDTDLDRTDFSWVRGTNAFLPSTVSVQWAKPMPETFHARFAAFERTYYYVLYVHPVRSPMLAGRAGWIHTPLDDDAMRAAAAHLIGEHDFSSFRSSECQSKTPVKHLYQIDVRRSGHFIHFRFRANAFLHHMVRNLMGCLVAVGRGRYPADWLADVLAGRDRTLAAPTFMADGLYLAHVGYPAEFAVPPAQLGSVPWSSVWADLDLPS</sequence>
<name>TRUA_BURCM</name>
<gene>
    <name evidence="1" type="primary">truA</name>
    <name type="ordered locus">Bamb_3346</name>
</gene>
<reference key="1">
    <citation type="submission" date="2006-08" db="EMBL/GenBank/DDBJ databases">
        <title>Complete sequence of chromosome 2 of Burkholderia cepacia AMMD.</title>
        <authorList>
            <person name="Copeland A."/>
            <person name="Lucas S."/>
            <person name="Lapidus A."/>
            <person name="Barry K."/>
            <person name="Detter J.C."/>
            <person name="Glavina del Rio T."/>
            <person name="Hammon N."/>
            <person name="Israni S."/>
            <person name="Pitluck S."/>
            <person name="Bruce D."/>
            <person name="Chain P."/>
            <person name="Malfatti S."/>
            <person name="Shin M."/>
            <person name="Vergez L."/>
            <person name="Schmutz J."/>
            <person name="Larimer F."/>
            <person name="Land M."/>
            <person name="Hauser L."/>
            <person name="Kyrpides N."/>
            <person name="Kim E."/>
            <person name="Parke J."/>
            <person name="Coenye T."/>
            <person name="Konstantinidis K."/>
            <person name="Ramette A."/>
            <person name="Tiedje J."/>
            <person name="Richardson P."/>
        </authorList>
    </citation>
    <scope>NUCLEOTIDE SEQUENCE [LARGE SCALE GENOMIC DNA]</scope>
    <source>
        <strain>ATCC BAA-244 / DSM 16087 / CCUG 44356 / LMG 19182 / AMMD</strain>
    </source>
</reference>
<dbReference type="EC" id="5.4.99.12" evidence="1"/>
<dbReference type="EMBL" id="CP000441">
    <property type="protein sequence ID" value="ABI88901.1"/>
    <property type="molecule type" value="Genomic_DNA"/>
</dbReference>
<dbReference type="RefSeq" id="WP_011658382.1">
    <property type="nucleotide sequence ID" value="NC_008391.1"/>
</dbReference>
<dbReference type="SMR" id="Q0BAC2"/>
<dbReference type="GeneID" id="93086354"/>
<dbReference type="KEGG" id="bam:Bamb_3346"/>
<dbReference type="PATRIC" id="fig|339670.21.peg.3556"/>
<dbReference type="eggNOG" id="COG0101">
    <property type="taxonomic scope" value="Bacteria"/>
</dbReference>
<dbReference type="Proteomes" id="UP000000662">
    <property type="component" value="Chromosome 2"/>
</dbReference>
<dbReference type="GO" id="GO:0003723">
    <property type="term" value="F:RNA binding"/>
    <property type="evidence" value="ECO:0007669"/>
    <property type="project" value="InterPro"/>
</dbReference>
<dbReference type="GO" id="GO:0160147">
    <property type="term" value="F:tRNA pseudouridine(38-40) synthase activity"/>
    <property type="evidence" value="ECO:0007669"/>
    <property type="project" value="UniProtKB-EC"/>
</dbReference>
<dbReference type="GO" id="GO:0031119">
    <property type="term" value="P:tRNA pseudouridine synthesis"/>
    <property type="evidence" value="ECO:0007669"/>
    <property type="project" value="UniProtKB-UniRule"/>
</dbReference>
<dbReference type="CDD" id="cd02570">
    <property type="entry name" value="PseudoU_synth_EcTruA"/>
    <property type="match status" value="1"/>
</dbReference>
<dbReference type="FunFam" id="3.30.70.580:FF:000001">
    <property type="entry name" value="tRNA pseudouridine synthase A"/>
    <property type="match status" value="1"/>
</dbReference>
<dbReference type="Gene3D" id="3.30.70.660">
    <property type="entry name" value="Pseudouridine synthase I, catalytic domain, C-terminal subdomain"/>
    <property type="match status" value="1"/>
</dbReference>
<dbReference type="Gene3D" id="3.30.70.580">
    <property type="entry name" value="Pseudouridine synthase I, catalytic domain, N-terminal subdomain"/>
    <property type="match status" value="1"/>
</dbReference>
<dbReference type="HAMAP" id="MF_00171">
    <property type="entry name" value="TruA"/>
    <property type="match status" value="1"/>
</dbReference>
<dbReference type="InterPro" id="IPR020103">
    <property type="entry name" value="PsdUridine_synth_cat_dom_sf"/>
</dbReference>
<dbReference type="InterPro" id="IPR001406">
    <property type="entry name" value="PsdUridine_synth_TruA"/>
</dbReference>
<dbReference type="InterPro" id="IPR020097">
    <property type="entry name" value="PsdUridine_synth_TruA_a/b_dom"/>
</dbReference>
<dbReference type="InterPro" id="IPR020095">
    <property type="entry name" value="PsdUridine_synth_TruA_C"/>
</dbReference>
<dbReference type="InterPro" id="IPR020094">
    <property type="entry name" value="TruA/RsuA/RluB/E/F_N"/>
</dbReference>
<dbReference type="NCBIfam" id="TIGR00071">
    <property type="entry name" value="hisT_truA"/>
    <property type="match status" value="1"/>
</dbReference>
<dbReference type="PANTHER" id="PTHR11142">
    <property type="entry name" value="PSEUDOURIDYLATE SYNTHASE"/>
    <property type="match status" value="1"/>
</dbReference>
<dbReference type="PANTHER" id="PTHR11142:SF0">
    <property type="entry name" value="TRNA PSEUDOURIDINE SYNTHASE-LIKE 1"/>
    <property type="match status" value="1"/>
</dbReference>
<dbReference type="Pfam" id="PF01416">
    <property type="entry name" value="PseudoU_synth_1"/>
    <property type="match status" value="2"/>
</dbReference>
<dbReference type="PIRSF" id="PIRSF001430">
    <property type="entry name" value="tRNA_psdUrid_synth"/>
    <property type="match status" value="1"/>
</dbReference>
<dbReference type="SUPFAM" id="SSF55120">
    <property type="entry name" value="Pseudouridine synthase"/>
    <property type="match status" value="1"/>
</dbReference>
<keyword id="KW-0413">Isomerase</keyword>
<keyword id="KW-0819">tRNA processing</keyword>
<evidence type="ECO:0000255" key="1">
    <source>
        <dbReference type="HAMAP-Rule" id="MF_00171"/>
    </source>
</evidence>
<proteinExistence type="inferred from homology"/>
<accession>Q0BAC2</accession>
<organism>
    <name type="scientific">Burkholderia ambifaria (strain ATCC BAA-244 / DSM 16087 / CCUG 44356 / LMG 19182 / AMMD)</name>
    <name type="common">Burkholderia cepacia (strain AMMD)</name>
    <dbReference type="NCBI Taxonomy" id="339670"/>
    <lineage>
        <taxon>Bacteria</taxon>
        <taxon>Pseudomonadati</taxon>
        <taxon>Pseudomonadota</taxon>
        <taxon>Betaproteobacteria</taxon>
        <taxon>Burkholderiales</taxon>
        <taxon>Burkholderiaceae</taxon>
        <taxon>Burkholderia</taxon>
        <taxon>Burkholderia cepacia complex</taxon>
    </lineage>
</organism>
<protein>
    <recommendedName>
        <fullName evidence="1">tRNA pseudouridine synthase A</fullName>
        <ecNumber evidence="1">5.4.99.12</ecNumber>
    </recommendedName>
    <alternativeName>
        <fullName evidence="1">tRNA pseudouridine(38-40) synthase</fullName>
    </alternativeName>
    <alternativeName>
        <fullName evidence="1">tRNA pseudouridylate synthase I</fullName>
    </alternativeName>
    <alternativeName>
        <fullName evidence="1">tRNA-uridine isomerase I</fullName>
    </alternativeName>
</protein>
<comment type="function">
    <text evidence="1">Formation of pseudouridine at positions 38, 39 and 40 in the anticodon stem and loop of transfer RNAs.</text>
</comment>
<comment type="catalytic activity">
    <reaction evidence="1">
        <text>uridine(38/39/40) in tRNA = pseudouridine(38/39/40) in tRNA</text>
        <dbReference type="Rhea" id="RHEA:22376"/>
        <dbReference type="Rhea" id="RHEA-COMP:10085"/>
        <dbReference type="Rhea" id="RHEA-COMP:10087"/>
        <dbReference type="ChEBI" id="CHEBI:65314"/>
        <dbReference type="ChEBI" id="CHEBI:65315"/>
        <dbReference type="EC" id="5.4.99.12"/>
    </reaction>
</comment>
<comment type="subunit">
    <text evidence="1">Homodimer.</text>
</comment>
<comment type="similarity">
    <text evidence="1">Belongs to the tRNA pseudouridine synthase TruA family.</text>
</comment>